<dbReference type="EMBL" id="X59693">
    <property type="protein sequence ID" value="CAA42214.1"/>
    <property type="molecule type" value="mRNA"/>
</dbReference>
<dbReference type="EMBL" id="BT020993">
    <property type="protein sequence ID" value="AAX09010.1"/>
    <property type="molecule type" value="mRNA"/>
</dbReference>
<dbReference type="EMBL" id="BC102337">
    <property type="protein sequence ID" value="AAI02338.1"/>
    <property type="molecule type" value="mRNA"/>
</dbReference>
<dbReference type="PIR" id="S16221">
    <property type="entry name" value="ZPBOC2"/>
</dbReference>
<dbReference type="RefSeq" id="NP_001357536.1">
    <property type="nucleotide sequence ID" value="NM_001370607.1"/>
</dbReference>
<dbReference type="RefSeq" id="NP_777055.1">
    <property type="nucleotide sequence ID" value="NM_174630.2"/>
</dbReference>
<dbReference type="PDB" id="1BCC">
    <property type="method" value="X-ray"/>
    <property type="resolution" value="3.16 A"/>
    <property type="chains" value="B=32-453"/>
</dbReference>
<dbReference type="PDB" id="1BE3">
    <property type="method" value="X-ray"/>
    <property type="resolution" value="3.00 A"/>
    <property type="chains" value="B=15-453"/>
</dbReference>
<dbReference type="PDB" id="1BGY">
    <property type="method" value="X-ray"/>
    <property type="resolution" value="3.00 A"/>
    <property type="chains" value="B/N=15-453"/>
</dbReference>
<dbReference type="PDB" id="1L0L">
    <property type="method" value="X-ray"/>
    <property type="resolution" value="2.35 A"/>
    <property type="chains" value="B=15-453"/>
</dbReference>
<dbReference type="PDB" id="1L0N">
    <property type="method" value="X-ray"/>
    <property type="resolution" value="2.60 A"/>
    <property type="chains" value="B=15-453"/>
</dbReference>
<dbReference type="PDB" id="1NTK">
    <property type="method" value="X-ray"/>
    <property type="resolution" value="2.60 A"/>
    <property type="chains" value="B=15-453"/>
</dbReference>
<dbReference type="PDB" id="1NTM">
    <property type="method" value="X-ray"/>
    <property type="resolution" value="2.40 A"/>
    <property type="chains" value="B=15-453"/>
</dbReference>
<dbReference type="PDB" id="1NTZ">
    <property type="method" value="X-ray"/>
    <property type="resolution" value="2.60 A"/>
    <property type="chains" value="B=15-453"/>
</dbReference>
<dbReference type="PDB" id="1NU1">
    <property type="method" value="X-ray"/>
    <property type="resolution" value="3.20 A"/>
    <property type="chains" value="B=15-453"/>
</dbReference>
<dbReference type="PDB" id="1PP9">
    <property type="method" value="X-ray"/>
    <property type="resolution" value="2.10 A"/>
    <property type="chains" value="B/O=15-453"/>
</dbReference>
<dbReference type="PDB" id="1PPJ">
    <property type="method" value="X-ray"/>
    <property type="resolution" value="2.10 A"/>
    <property type="chains" value="B/O=15-453"/>
</dbReference>
<dbReference type="PDB" id="1QCR">
    <property type="method" value="X-ray"/>
    <property type="resolution" value="2.70 A"/>
    <property type="chains" value="B=31-453"/>
</dbReference>
<dbReference type="PDB" id="1SQB">
    <property type="method" value="X-ray"/>
    <property type="resolution" value="2.69 A"/>
    <property type="chains" value="B=1-453"/>
</dbReference>
<dbReference type="PDB" id="1SQP">
    <property type="method" value="X-ray"/>
    <property type="resolution" value="2.70 A"/>
    <property type="chains" value="B=1-453"/>
</dbReference>
<dbReference type="PDB" id="1SQQ">
    <property type="method" value="X-ray"/>
    <property type="resolution" value="3.00 A"/>
    <property type="chains" value="B=15-453"/>
</dbReference>
<dbReference type="PDB" id="1SQV">
    <property type="method" value="X-ray"/>
    <property type="resolution" value="2.85 A"/>
    <property type="chains" value="B=15-453"/>
</dbReference>
<dbReference type="PDB" id="1SQX">
    <property type="method" value="X-ray"/>
    <property type="resolution" value="2.60 A"/>
    <property type="chains" value="B=15-453"/>
</dbReference>
<dbReference type="PDB" id="2A06">
    <property type="method" value="X-ray"/>
    <property type="resolution" value="2.10 A"/>
    <property type="chains" value="B/O=15-453"/>
</dbReference>
<dbReference type="PDB" id="2BCC">
    <property type="method" value="X-ray"/>
    <property type="resolution" value="3.50 A"/>
    <property type="chains" value="B=32-453"/>
</dbReference>
<dbReference type="PDB" id="2FYU">
    <property type="method" value="X-ray"/>
    <property type="resolution" value="2.26 A"/>
    <property type="chains" value="B=15-453"/>
</dbReference>
<dbReference type="PDB" id="2YBB">
    <property type="method" value="EM"/>
    <property type="resolution" value="19.00 A"/>
    <property type="chains" value="B/b=15-453"/>
</dbReference>
<dbReference type="PDB" id="3BCC">
    <property type="method" value="X-ray"/>
    <property type="resolution" value="3.70 A"/>
    <property type="chains" value="B=32-453"/>
</dbReference>
<dbReference type="PDB" id="4D6T">
    <property type="method" value="X-ray"/>
    <property type="resolution" value="3.57 A"/>
    <property type="chains" value="B/O=1-453"/>
</dbReference>
<dbReference type="PDB" id="4D6U">
    <property type="method" value="X-ray"/>
    <property type="resolution" value="4.09 A"/>
    <property type="chains" value="B/O=1-453"/>
</dbReference>
<dbReference type="PDB" id="5GPN">
    <property type="method" value="EM"/>
    <property type="resolution" value="5.40 A"/>
    <property type="chains" value="B/N=15-453"/>
</dbReference>
<dbReference type="PDB" id="5KLV">
    <property type="method" value="X-ray"/>
    <property type="resolution" value="2.65 A"/>
    <property type="chains" value="B=15-453"/>
</dbReference>
<dbReference type="PDB" id="5LUF">
    <property type="method" value="EM"/>
    <property type="resolution" value="9.10 A"/>
    <property type="chains" value="m/n=15-453"/>
</dbReference>
<dbReference type="PDB" id="5NMI">
    <property type="method" value="X-ray"/>
    <property type="resolution" value="3.50 A"/>
    <property type="chains" value="B/O=31-453"/>
</dbReference>
<dbReference type="PDB" id="5OKD">
    <property type="method" value="X-ray"/>
    <property type="resolution" value="3.10 A"/>
    <property type="chains" value="B=1-453"/>
</dbReference>
<dbReference type="PDB" id="6FO0">
    <property type="method" value="EM"/>
    <property type="resolution" value="4.10 A"/>
    <property type="chains" value="B/O=1-453"/>
</dbReference>
<dbReference type="PDB" id="6FO2">
    <property type="method" value="EM"/>
    <property type="resolution" value="4.40 A"/>
    <property type="chains" value="B/O=1-453"/>
</dbReference>
<dbReference type="PDB" id="6FO6">
    <property type="method" value="EM"/>
    <property type="resolution" value="4.10 A"/>
    <property type="chains" value="B/O=1-453"/>
</dbReference>
<dbReference type="PDB" id="6HAW">
    <property type="method" value="X-ray"/>
    <property type="resolution" value="3.45 A"/>
    <property type="chains" value="B=36-453"/>
</dbReference>
<dbReference type="PDB" id="6NHG">
    <property type="method" value="X-ray"/>
    <property type="resolution" value="2.80 A"/>
    <property type="chains" value="B=15-453"/>
</dbReference>
<dbReference type="PDB" id="6XVF">
    <property type="method" value="X-ray"/>
    <property type="resolution" value="3.50 A"/>
    <property type="chains" value="B=36-453"/>
</dbReference>
<dbReference type="PDB" id="6ZFS">
    <property type="method" value="X-ray"/>
    <property type="resolution" value="3.50 A"/>
    <property type="chains" value="B=34-453"/>
</dbReference>
<dbReference type="PDB" id="6ZFT">
    <property type="method" value="X-ray"/>
    <property type="resolution" value="3.30 A"/>
    <property type="chains" value="B=34-453"/>
</dbReference>
<dbReference type="PDB" id="6ZFU">
    <property type="method" value="X-ray"/>
    <property type="resolution" value="3.50 A"/>
    <property type="chains" value="B=34-453"/>
</dbReference>
<dbReference type="PDB" id="7DGQ">
    <property type="method" value="EM"/>
    <property type="resolution" value="5.00 A"/>
    <property type="chains" value="l/x=1-453"/>
</dbReference>
<dbReference type="PDB" id="7DGR">
    <property type="method" value="EM"/>
    <property type="resolution" value="4.60 A"/>
    <property type="chains" value="l/x=1-453"/>
</dbReference>
<dbReference type="PDB" id="7DGS">
    <property type="method" value="EM"/>
    <property type="resolution" value="7.80 A"/>
    <property type="chains" value="l/x=1-453"/>
</dbReference>
<dbReference type="PDB" id="7DKF">
    <property type="method" value="EM"/>
    <property type="resolution" value="8.30 A"/>
    <property type="chains" value="B1/N1=1-453"/>
</dbReference>
<dbReference type="PDB" id="7R3V">
    <property type="method" value="X-ray"/>
    <property type="resolution" value="3.20 A"/>
    <property type="chains" value="B=36-453"/>
</dbReference>
<dbReference type="PDB" id="7TAY">
    <property type="method" value="X-ray"/>
    <property type="resolution" value="2.95 A"/>
    <property type="chains" value="B=15-453"/>
</dbReference>
<dbReference type="PDB" id="7TZ6">
    <property type="method" value="EM"/>
    <property type="resolution" value="2.88 A"/>
    <property type="chains" value="B/O=15-453"/>
</dbReference>
<dbReference type="PDB" id="8P65">
    <property type="method" value="EM"/>
    <property type="resolution" value="3.00 A"/>
    <property type="chains" value="B/O=15-453"/>
</dbReference>
<dbReference type="PDB" id="9GCX">
    <property type="method" value="X-ray"/>
    <property type="resolution" value="3.52 A"/>
    <property type="chains" value="B=1-453"/>
</dbReference>
<dbReference type="PDBsum" id="1BCC"/>
<dbReference type="PDBsum" id="1BE3"/>
<dbReference type="PDBsum" id="1BGY"/>
<dbReference type="PDBsum" id="1L0L"/>
<dbReference type="PDBsum" id="1L0N"/>
<dbReference type="PDBsum" id="1NTK"/>
<dbReference type="PDBsum" id="1NTM"/>
<dbReference type="PDBsum" id="1NTZ"/>
<dbReference type="PDBsum" id="1NU1"/>
<dbReference type="PDBsum" id="1PP9"/>
<dbReference type="PDBsum" id="1PPJ"/>
<dbReference type="PDBsum" id="1QCR"/>
<dbReference type="PDBsum" id="1SQB"/>
<dbReference type="PDBsum" id="1SQP"/>
<dbReference type="PDBsum" id="1SQQ"/>
<dbReference type="PDBsum" id="1SQV"/>
<dbReference type="PDBsum" id="1SQX"/>
<dbReference type="PDBsum" id="2A06"/>
<dbReference type="PDBsum" id="2BCC"/>
<dbReference type="PDBsum" id="2FYU"/>
<dbReference type="PDBsum" id="2YBB"/>
<dbReference type="PDBsum" id="3BCC"/>
<dbReference type="PDBsum" id="4D6T"/>
<dbReference type="PDBsum" id="4D6U"/>
<dbReference type="PDBsum" id="5GPN"/>
<dbReference type="PDBsum" id="5KLV"/>
<dbReference type="PDBsum" id="5LUF"/>
<dbReference type="PDBsum" id="5NMI"/>
<dbReference type="PDBsum" id="5OKD"/>
<dbReference type="PDBsum" id="6FO0"/>
<dbReference type="PDBsum" id="6FO2"/>
<dbReference type="PDBsum" id="6FO6"/>
<dbReference type="PDBsum" id="6HAW"/>
<dbReference type="PDBsum" id="6NHG"/>
<dbReference type="PDBsum" id="6XVF"/>
<dbReference type="PDBsum" id="6ZFS"/>
<dbReference type="PDBsum" id="6ZFT"/>
<dbReference type="PDBsum" id="6ZFU"/>
<dbReference type="PDBsum" id="7DGQ"/>
<dbReference type="PDBsum" id="7DGR"/>
<dbReference type="PDBsum" id="7DGS"/>
<dbReference type="PDBsum" id="7DKF"/>
<dbReference type="PDBsum" id="7R3V"/>
<dbReference type="PDBsum" id="7TAY"/>
<dbReference type="PDBsum" id="7TZ6"/>
<dbReference type="PDBsum" id="8P65"/>
<dbReference type="PDBsum" id="9GCX"/>
<dbReference type="EMDB" id="EMD-17461"/>
<dbReference type="EMDB" id="EMD-26203"/>
<dbReference type="EMDB" id="EMD-30673"/>
<dbReference type="EMDB" id="EMD-30674"/>
<dbReference type="EMDB" id="EMD-30675"/>
<dbReference type="EMDB" id="EMD-30706"/>
<dbReference type="EMDB" id="EMD-4107"/>
<dbReference type="EMDB" id="EMD-4286"/>
<dbReference type="EMDB" id="EMD-4288"/>
<dbReference type="EMDB" id="EMD-4292"/>
<dbReference type="EMDB" id="EMD-9534"/>
<dbReference type="SMR" id="P23004"/>
<dbReference type="CORUM" id="P23004"/>
<dbReference type="DIP" id="DIP-1106N"/>
<dbReference type="FunCoup" id="P23004">
    <property type="interactions" value="1295"/>
</dbReference>
<dbReference type="IntAct" id="P23004">
    <property type="interactions" value="2"/>
</dbReference>
<dbReference type="STRING" id="9913.ENSBTAP00000028853"/>
<dbReference type="MEROPS" id="M16.974"/>
<dbReference type="GlyGen" id="P23004">
    <property type="glycosylation" value="1 site, 1 O-linked glycan (1 site)"/>
</dbReference>
<dbReference type="PaxDb" id="9913-ENSBTAP00000028853"/>
<dbReference type="PeptideAtlas" id="P23004"/>
<dbReference type="Ensembl" id="ENSBTAT00000028853.6">
    <property type="protein sequence ID" value="ENSBTAP00000028853.4"/>
    <property type="gene ID" value="ENSBTAG00000021651.6"/>
</dbReference>
<dbReference type="GeneID" id="282394"/>
<dbReference type="VEuPathDB" id="HostDB:ENSBTAG00000021651"/>
<dbReference type="VGNC" id="VGNC:36696">
    <property type="gene designation" value="UQCRC2"/>
</dbReference>
<dbReference type="eggNOG" id="KOG2583">
    <property type="taxonomic scope" value="Eukaryota"/>
</dbReference>
<dbReference type="GeneTree" id="ENSGT00940000154915"/>
<dbReference type="HOGENOM" id="CLU_009902_0_0_1"/>
<dbReference type="InParanoid" id="P23004"/>
<dbReference type="OMA" id="APKFALY"/>
<dbReference type="OrthoDB" id="6369905at2759"/>
<dbReference type="TreeFam" id="TF105033"/>
<dbReference type="Reactome" id="R-BTA-611105">
    <property type="pathway name" value="Respiratory electron transport"/>
</dbReference>
<dbReference type="Reactome" id="R-BTA-9837999">
    <property type="pathway name" value="Mitochondrial protein degradation"/>
</dbReference>
<dbReference type="Reactome" id="R-BTA-9865881">
    <property type="pathway name" value="Complex III assembly"/>
</dbReference>
<dbReference type="EvolutionaryTrace" id="P23004"/>
<dbReference type="Proteomes" id="UP000009136">
    <property type="component" value="Chromosome 25"/>
</dbReference>
<dbReference type="Bgee" id="ENSBTAG00000021651">
    <property type="expression patterns" value="Expressed in cardiac ventricle and 104 other cell types or tissues"/>
</dbReference>
<dbReference type="GO" id="GO:0005743">
    <property type="term" value="C:mitochondrial inner membrane"/>
    <property type="evidence" value="ECO:0007669"/>
    <property type="project" value="UniProtKB-SubCell"/>
</dbReference>
<dbReference type="GO" id="GO:0005739">
    <property type="term" value="C:mitochondrion"/>
    <property type="evidence" value="ECO:0000318"/>
    <property type="project" value="GO_Central"/>
</dbReference>
<dbReference type="GO" id="GO:0046872">
    <property type="term" value="F:metal ion binding"/>
    <property type="evidence" value="ECO:0007669"/>
    <property type="project" value="InterPro"/>
</dbReference>
<dbReference type="GO" id="GO:0004222">
    <property type="term" value="F:metalloendopeptidase activity"/>
    <property type="evidence" value="ECO:0007669"/>
    <property type="project" value="InterPro"/>
</dbReference>
<dbReference type="GO" id="GO:0006508">
    <property type="term" value="P:proteolysis"/>
    <property type="evidence" value="ECO:0007669"/>
    <property type="project" value="InterPro"/>
</dbReference>
<dbReference type="FunFam" id="3.30.830.10:FF:000018">
    <property type="entry name" value="Cytochrome b-c1 complex subunit 2, mitochondrial"/>
    <property type="match status" value="1"/>
</dbReference>
<dbReference type="FunFam" id="3.30.830.10:FF:000026">
    <property type="entry name" value="Cytochrome b-c1 complex subunit 2, mitochondrial"/>
    <property type="match status" value="1"/>
</dbReference>
<dbReference type="Gene3D" id="3.30.830.10">
    <property type="entry name" value="Metalloenzyme, LuxS/M16 peptidase-like"/>
    <property type="match status" value="2"/>
</dbReference>
<dbReference type="InterPro" id="IPR011249">
    <property type="entry name" value="Metalloenz_LuxS/M16"/>
</dbReference>
<dbReference type="InterPro" id="IPR050361">
    <property type="entry name" value="MPP/UQCRC_Complex"/>
</dbReference>
<dbReference type="InterPro" id="IPR011765">
    <property type="entry name" value="Pept_M16_N"/>
</dbReference>
<dbReference type="InterPro" id="IPR001431">
    <property type="entry name" value="Pept_M16_Zn_BS"/>
</dbReference>
<dbReference type="InterPro" id="IPR007863">
    <property type="entry name" value="Peptidase_M16_C"/>
</dbReference>
<dbReference type="PANTHER" id="PTHR11851:SF226">
    <property type="entry name" value="CYTOCHROME B-C1 COMPLEX SUBUNIT 2, MITOCHONDRIAL"/>
    <property type="match status" value="1"/>
</dbReference>
<dbReference type="PANTHER" id="PTHR11851">
    <property type="entry name" value="METALLOPROTEASE"/>
    <property type="match status" value="1"/>
</dbReference>
<dbReference type="Pfam" id="PF00675">
    <property type="entry name" value="Peptidase_M16"/>
    <property type="match status" value="1"/>
</dbReference>
<dbReference type="Pfam" id="PF05193">
    <property type="entry name" value="Peptidase_M16_C"/>
    <property type="match status" value="1"/>
</dbReference>
<dbReference type="SUPFAM" id="SSF63411">
    <property type="entry name" value="LuxS/MPP-like metallohydrolase"/>
    <property type="match status" value="2"/>
</dbReference>
<dbReference type="PROSITE" id="PS00143">
    <property type="entry name" value="INSULINASE"/>
    <property type="match status" value="1"/>
</dbReference>
<gene>
    <name type="primary">UQCRC2</name>
</gene>
<organism>
    <name type="scientific">Bos taurus</name>
    <name type="common">Bovine</name>
    <dbReference type="NCBI Taxonomy" id="9913"/>
    <lineage>
        <taxon>Eukaryota</taxon>
        <taxon>Metazoa</taxon>
        <taxon>Chordata</taxon>
        <taxon>Craniata</taxon>
        <taxon>Vertebrata</taxon>
        <taxon>Euteleostomi</taxon>
        <taxon>Mammalia</taxon>
        <taxon>Eutheria</taxon>
        <taxon>Laurasiatheria</taxon>
        <taxon>Artiodactyla</taxon>
        <taxon>Ruminantia</taxon>
        <taxon>Pecora</taxon>
        <taxon>Bovidae</taxon>
        <taxon>Bovinae</taxon>
        <taxon>Bos</taxon>
    </lineage>
</organism>
<feature type="transit peptide" description="Mitochondrion" evidence="6 7">
    <location>
        <begin position="1"/>
        <end position="14"/>
    </location>
</feature>
<feature type="chain" id="PRO_0000026790" description="Cytochrome b-c1 complex subunit 2, mitochondrial">
    <location>
        <begin position="15"/>
        <end position="453"/>
    </location>
</feature>
<feature type="modified residue" description="N6-acetyllysine" evidence="3">
    <location>
        <position position="66"/>
    </location>
</feature>
<feature type="modified residue" description="N6-acetyllysine" evidence="3">
    <location>
        <position position="199"/>
    </location>
</feature>
<feature type="modified residue" description="N6-acetyllysine" evidence="3">
    <location>
        <position position="250"/>
    </location>
</feature>
<feature type="sequence variant">
    <original>T</original>
    <variation>R</variation>
    <location>
        <position position="41"/>
    </location>
</feature>
<feature type="strand" evidence="17">
    <location>
        <begin position="17"/>
        <end position="19"/>
    </location>
</feature>
<feature type="strand" evidence="14">
    <location>
        <begin position="39"/>
        <end position="42"/>
    </location>
</feature>
<feature type="strand" evidence="12">
    <location>
        <begin position="44"/>
        <end position="46"/>
    </location>
</feature>
<feature type="strand" evidence="14">
    <location>
        <begin position="48"/>
        <end position="52"/>
    </location>
</feature>
<feature type="strand" evidence="14">
    <location>
        <begin position="57"/>
        <end position="66"/>
    </location>
</feature>
<feature type="helix" evidence="14">
    <location>
        <begin position="69"/>
        <end position="71"/>
    </location>
</feature>
<feature type="turn" evidence="13">
    <location>
        <begin position="74"/>
        <end position="78"/>
    </location>
</feature>
<feature type="helix" evidence="14">
    <location>
        <begin position="79"/>
        <end position="85"/>
    </location>
</feature>
<feature type="turn" evidence="14">
    <location>
        <begin position="86"/>
        <end position="88"/>
    </location>
</feature>
<feature type="strand" evidence="14">
    <location>
        <begin position="91"/>
        <end position="94"/>
    </location>
</feature>
<feature type="helix" evidence="14">
    <location>
        <begin position="96"/>
        <end position="105"/>
    </location>
</feature>
<feature type="strand" evidence="14">
    <location>
        <begin position="109"/>
        <end position="114"/>
    </location>
</feature>
<feature type="strand" evidence="14">
    <location>
        <begin position="119"/>
        <end position="126"/>
    </location>
</feature>
<feature type="helix" evidence="14">
    <location>
        <begin position="127"/>
        <end position="129"/>
    </location>
</feature>
<feature type="helix" evidence="14">
    <location>
        <begin position="130"/>
        <end position="142"/>
    </location>
</feature>
<feature type="helix" evidence="14">
    <location>
        <begin position="148"/>
        <end position="165"/>
    </location>
</feature>
<feature type="helix" evidence="14">
    <location>
        <begin position="169"/>
        <end position="181"/>
    </location>
</feature>
<feature type="strand" evidence="14">
    <location>
        <begin position="182"/>
        <end position="184"/>
    </location>
</feature>
<feature type="helix" evidence="14">
    <location>
        <begin position="185"/>
        <end position="187"/>
    </location>
</feature>
<feature type="helix" evidence="14">
    <location>
        <begin position="194"/>
        <end position="196"/>
    </location>
</feature>
<feature type="turn" evidence="14">
    <location>
        <begin position="197"/>
        <end position="199"/>
    </location>
</feature>
<feature type="helix" evidence="14">
    <location>
        <begin position="202"/>
        <end position="212"/>
    </location>
</feature>
<feature type="helix" evidence="14">
    <location>
        <begin position="215"/>
        <end position="217"/>
    </location>
</feature>
<feature type="strand" evidence="14">
    <location>
        <begin position="218"/>
        <end position="225"/>
    </location>
</feature>
<feature type="helix" evidence="14">
    <location>
        <begin position="227"/>
        <end position="237"/>
    </location>
</feature>
<feature type="strand" evidence="15">
    <location>
        <begin position="246"/>
        <end position="249"/>
    </location>
</feature>
<feature type="strand" evidence="14">
    <location>
        <begin position="256"/>
        <end position="261"/>
    </location>
</feature>
<feature type="strand" evidence="14">
    <location>
        <begin position="265"/>
        <end position="274"/>
    </location>
</feature>
<feature type="strand" evidence="16">
    <location>
        <begin position="278"/>
        <end position="280"/>
    </location>
</feature>
<feature type="helix" evidence="14">
    <location>
        <begin position="281"/>
        <end position="293"/>
    </location>
</feature>
<feature type="strand" evidence="15">
    <location>
        <begin position="298"/>
        <end position="301"/>
    </location>
</feature>
<feature type="helix" evidence="14">
    <location>
        <begin position="308"/>
        <end position="316"/>
    </location>
</feature>
<feature type="strand" evidence="14">
    <location>
        <begin position="321"/>
        <end position="330"/>
    </location>
</feature>
<feature type="strand" evidence="14">
    <location>
        <begin position="333"/>
        <end position="343"/>
    </location>
</feature>
<feature type="helix" evidence="14">
    <location>
        <begin position="344"/>
        <end position="346"/>
    </location>
</feature>
<feature type="helix" evidence="14">
    <location>
        <begin position="347"/>
        <end position="362"/>
    </location>
</feature>
<feature type="helix" evidence="14">
    <location>
        <begin position="368"/>
        <end position="385"/>
    </location>
</feature>
<feature type="helix" evidence="14">
    <location>
        <begin position="389"/>
        <end position="403"/>
    </location>
</feature>
<feature type="helix" evidence="14">
    <location>
        <begin position="409"/>
        <end position="417"/>
    </location>
</feature>
<feature type="helix" evidence="14">
    <location>
        <begin position="421"/>
        <end position="433"/>
    </location>
</feature>
<feature type="strand" evidence="14">
    <location>
        <begin position="436"/>
        <end position="442"/>
    </location>
</feature>
<feature type="helix" evidence="14">
    <location>
        <begin position="444"/>
        <end position="446"/>
    </location>
</feature>
<feature type="helix" evidence="14">
    <location>
        <begin position="450"/>
        <end position="452"/>
    </location>
</feature>
<evidence type="ECO:0000250" key="1">
    <source>
        <dbReference type="UniProtKB" id="P07257"/>
    </source>
</evidence>
<evidence type="ECO:0000250" key="2">
    <source>
        <dbReference type="UniProtKB" id="P22695"/>
    </source>
</evidence>
<evidence type="ECO:0000250" key="3">
    <source>
        <dbReference type="UniProtKB" id="Q9DB77"/>
    </source>
</evidence>
<evidence type="ECO:0000269" key="4">
    <source>
    </source>
</evidence>
<evidence type="ECO:0000269" key="5">
    <source>
    </source>
</evidence>
<evidence type="ECO:0000269" key="6">
    <source>
    </source>
</evidence>
<evidence type="ECO:0000269" key="7">
    <source>
    </source>
</evidence>
<evidence type="ECO:0000269" key="8">
    <source>
    </source>
</evidence>
<evidence type="ECO:0000269" key="9">
    <source>
    </source>
</evidence>
<evidence type="ECO:0000305" key="10"/>
<evidence type="ECO:0000305" key="11">
    <source>
    </source>
</evidence>
<evidence type="ECO:0007829" key="12">
    <source>
        <dbReference type="PDB" id="1BCC"/>
    </source>
</evidence>
<evidence type="ECO:0007829" key="13">
    <source>
        <dbReference type="PDB" id="1L0N"/>
    </source>
</evidence>
<evidence type="ECO:0007829" key="14">
    <source>
        <dbReference type="PDB" id="1PP9"/>
    </source>
</evidence>
<evidence type="ECO:0007829" key="15">
    <source>
        <dbReference type="PDB" id="1SQB"/>
    </source>
</evidence>
<evidence type="ECO:0007829" key="16">
    <source>
        <dbReference type="PDB" id="1SQV"/>
    </source>
</evidence>
<evidence type="ECO:0007829" key="17">
    <source>
        <dbReference type="PDB" id="8P65"/>
    </source>
</evidence>
<protein>
    <recommendedName>
        <fullName>Cytochrome b-c1 complex subunit 2, mitochondrial</fullName>
    </recommendedName>
    <alternativeName>
        <fullName>Complex III subunit 2</fullName>
    </alternativeName>
    <alternativeName>
        <fullName>Core protein II</fullName>
    </alternativeName>
    <alternativeName>
        <fullName>Ubiquinol-cytochrome-c reductase complex core protein 2</fullName>
    </alternativeName>
</protein>
<name>QCR2_BOVIN</name>
<accession>P23004</accession>
<accession>Q3ZCG7</accession>
<accession>Q5E9C7</accession>
<sequence>MKLLTRAGSLSRFYSLKVAPKVKATEAPAGVPPHPQDLEFTRLPNGLVIASLENYAPASRIGLFIKAGSRYENSNNLGTSHLLRLASSLTTKGASSFKITRGIEAVGGKLSVTSTRENMAYTVECLRDDVDILMEFLLNVTTAPEFRRWEVAALQPQLRIDKAVALQNPQAHVIENLHAAAYRNALANSLYCPDYRIGKVTPVELHDYVQNHFTSARMALIGLGVSHPVLKQVAEQFLNIRGGLGLSGAKAKYHGGEIREQNGDSLVHAALVAESAAIGSAEANAFSVLQHVLGAGPHVKRGSNATSSLYQAVAKGVHQPFDVSAFNASYSDSGLFGFYTISQAASAGDVIKAAYNQVKTIAQGNLSNPDVQAAKNKLKAGYLMSVESSEGFLDEVGSQALAAGSYTPPSTVLQQIDAVADADVINAAKKFVSGRKSMAASGNLGHTPFIDEL</sequence>
<comment type="function">
    <text evidence="1 4 9 11">Component of the ubiquinol-cytochrome c oxidoreductase, a multisubunit transmembrane complex that is part of the mitochondrial electron transport chain which drives oxidative phosphorylation. The respiratory chain contains 3 multisubunit complexes succinate dehydrogenase (complex II, CII), ubiquinol-cytochrome c oxidoreductase (cytochrome b-c1 complex, complex III, CIII) and cytochrome c oxidase (complex IV, CIV), that cooperate to transfer electrons derived from NADH and succinate to molecular oxygen, creating an electrochemical gradient over the inner membrane that drives transmembrane transport and the ATP synthase. The cytochrome b-c1 complex catalyzes electron transfer from ubiquinol to cytochrome c, linking this redox reaction to translocation of protons across the mitochondrial inner membrane, with protons being carried across the membrane as hydrogens on the quinol. In the process called Q cycle, 2 protons are consumed from the matrix, 4 protons are released into the intermembrane space and 2 electrons are passed to cytochrome c (By similarity). The 2 core subunits UQCRC1/QCR1 and UQCRC2/QCR2 are homologous to the 2 mitochondrial-processing peptidase (MPP) subunits beta-MPP and alpha-MPP respectively, and they seem to have preserved their MPP processing properties (PubMed:11073949, PubMed:9694818). May be involved in the in situ processing of UQCRFS1 into the mature Rieske protein and its mitochondrial targeting sequence (MTS)/subunit 9 when incorporated into complex III (Probable).</text>
</comment>
<comment type="subunit">
    <text evidence="2 3 5 8">Component of the ubiquinol-cytochrome c oxidoreductase (cytochrome b-c1 complex, complex III, CIII), a multisubunit enzyme composed of 11 subunits. The complex is composed of 3 respiratory subunits cytochrome b, cytochrome c1 and Rieske protein UQCRFS1, 2 core protein subunits UQCRC1/QCR1 and UQCRC2/QCR2, and 6 low-molecular weight protein subunits UQCRH/QCR6, UQCRB/QCR7, UQCRQ/QCR8, UQCR10/QCR9, UQCR11/QCR10 and subunit 9, the cleavage product of Rieske protein UQCRFS1 (PubMed:9651245). The complex exists as an obligatory dimer and forms supercomplexes (SCs) in the inner mitochondrial membrane with NADH-ubiquinone oxidoreductase (complex I, CI) and cytochrome c oxidase (complex IV, CIV), resulting in different assemblies (supercomplex SCI(1)III(2)IV(1) and megacomplex MCI(2)III(2)IV(2)) (PubMed:27830641). Interacts with RAB5IF (By similarity). Interacts with STMP1 (By similarity).</text>
</comment>
<comment type="subcellular location">
    <subcellularLocation>
        <location evidence="1">Mitochondrion inner membrane</location>
        <topology evidence="1">Peripheral membrane protein</topology>
        <orientation evidence="1">Matrix side</orientation>
    </subcellularLocation>
</comment>
<comment type="similarity">
    <text evidence="10">Belongs to the peptidase M16 family. UQCRC2/QCR2 subfamily.</text>
</comment>
<reference key="1">
    <citation type="journal article" date="1991" name="Eur. J. Biochem.">
        <title>Core I protein of bovine ubiquinol-cytochrome-c reductase; an additional member of the mitochondrial-protein-processing family. Cloning of bovine core I and core II cDNAs and primary structure of the proteins.</title>
        <authorList>
            <person name="Gencic S."/>
            <person name="Schaegger H."/>
            <person name="von Jagow G."/>
        </authorList>
    </citation>
    <scope>NUCLEOTIDE SEQUENCE [MRNA]</scope>
    <source>
        <tissue>Heart</tissue>
    </source>
</reference>
<reference key="2">
    <citation type="journal article" date="2005" name="BMC Genomics">
        <title>Characterization of 954 bovine full-CDS cDNA sequences.</title>
        <authorList>
            <person name="Harhay G.P."/>
            <person name="Sonstegard T.S."/>
            <person name="Keele J.W."/>
            <person name="Heaton M.P."/>
            <person name="Clawson M.L."/>
            <person name="Snelling W.M."/>
            <person name="Wiedmann R.T."/>
            <person name="Van Tassell C.P."/>
            <person name="Smith T.P.L."/>
        </authorList>
    </citation>
    <scope>NUCLEOTIDE SEQUENCE [LARGE SCALE MRNA]</scope>
</reference>
<reference key="3">
    <citation type="submission" date="2005-08" db="EMBL/GenBank/DDBJ databases">
        <authorList>
            <consortium name="NIH - Mammalian Gene Collection (MGC) project"/>
        </authorList>
    </citation>
    <scope>NUCLEOTIDE SEQUENCE [LARGE SCALE MRNA]</scope>
    <source>
        <strain>Crossbred X Angus</strain>
        <tissue>Ileum</tissue>
    </source>
</reference>
<reference key="4">
    <citation type="journal article" date="1988" name="J. Bioenerg. Biomembr.">
        <title>Complexity and tissue specificity of the mitochondrial respiratory chain.</title>
        <authorList>
            <person name="Capaldi R.A."/>
            <person name="Gonzalez-Halphen D."/>
            <person name="Zhang Y.-Z."/>
            <person name="Yanamura W."/>
        </authorList>
    </citation>
    <scope>PROTEIN SEQUENCE OF 15-46</scope>
</reference>
<reference key="5">
    <citation type="journal article" date="1988" name="Biochemistry">
        <title>Subunit arrangement in beef heart complex III.</title>
        <authorList>
            <person name="Gonzalez-Halphen D."/>
            <person name="Lindorfer M.A."/>
            <person name="Capaldi R.M."/>
        </authorList>
    </citation>
    <scope>PROTEIN SEQUENCE OF 15-43</scope>
</reference>
<reference key="6">
    <citation type="journal article" date="1998" name="J. Biol. Chem.">
        <title>Activation of a matrix processing peptidase from the crystalline cytochrome bc1 complex of bovine heart mitochondria.</title>
        <authorList>
            <person name="Deng K."/>
            <person name="Zhang L."/>
            <person name="Kachurin A.M."/>
            <person name="Yu L."/>
            <person name="Xia D."/>
            <person name="Kim H."/>
            <person name="Deisenhofer J."/>
            <person name="Yu C.A."/>
        </authorList>
    </citation>
    <scope>FUNCTION</scope>
</reference>
<reference key="7">
    <citation type="journal article" date="2001" name="J. Biol. Chem.">
        <title>Reconstitution of mitochondrial processing peptidase from the core proteins (subunits I and II) of bovine heart mitochondrial cytochrome bc(1) complex.</title>
        <authorList>
            <person name="Deng K."/>
            <person name="Shenoy S.K."/>
            <person name="Tso S.C."/>
            <person name="Yu L."/>
            <person name="Yu C.A."/>
        </authorList>
    </citation>
    <scope>FUNCTION</scope>
</reference>
<reference key="8">
    <citation type="journal article" date="2018" name="Cell Cycle">
        <title>Mitochondrial complex III Rieske Fe-S protein processing and assembly.</title>
        <authorList>
            <person name="Fernandez-Vizarra E."/>
            <person name="Zeviani M."/>
        </authorList>
    </citation>
    <scope>FUNCTION</scope>
</reference>
<reference key="9">
    <citation type="journal article" date="1997" name="Science">
        <title>Crystal structure of the cytochrome bc1 complex from bovine heart mitochondria.</title>
        <authorList>
            <person name="Xia D."/>
            <person name="Yu C.A."/>
            <person name="Kim H."/>
            <person name="Xia J.Z."/>
            <person name="Kachurin A.M."/>
            <person name="Zhang L."/>
            <person name="Yu L."/>
            <person name="Deisenhofer J."/>
        </authorList>
    </citation>
    <scope>X-RAY CRYSTALLOGRAPHY (2.7 ANGSTROMS)</scope>
</reference>
<reference key="10">
    <citation type="journal article" date="1997" name="Science">
        <authorList>
            <person name="Xia D."/>
            <person name="Yu C.A."/>
            <person name="Kim H."/>
            <person name="Xia J.Z."/>
            <person name="Kachurin A.M."/>
            <person name="Zhang L."/>
            <person name="Yu L."/>
            <person name="Deisenhofer J."/>
        </authorList>
    </citation>
    <scope>ERRATUM OF PUBMED:9204897</scope>
</reference>
<reference key="11">
    <citation type="journal article" date="1998" name="Science">
        <title>Complete structure of the 11-subunit bovine mitochondrial cytochrome bc1 complex.</title>
        <authorList>
            <person name="Iwata S."/>
            <person name="Lee J.W."/>
            <person name="Okada K."/>
            <person name="Lee J.K."/>
            <person name="Iwata M."/>
            <person name="Rasmussen B."/>
            <person name="Link T.A."/>
            <person name="Ramaswamy S."/>
            <person name="Jap B.K."/>
        </authorList>
    </citation>
    <scope>X-RAY CRYSTALLOGRAPHY (3.0 ANGSTROMS)</scope>
</reference>
<reference key="12">
    <citation type="journal article" date="2002" name="Biochemistry">
        <title>The crystal structure of mitochondrial cytochrome bc1 in complex with famoxadone: the role of aromatic-aromatic interaction in inhibition.</title>
        <authorList>
            <person name="Gao X."/>
            <person name="Wen X."/>
            <person name="Yu C."/>
            <person name="Esser L."/>
            <person name="Tsao S."/>
            <person name="Quinn B."/>
            <person name="Zhang L."/>
            <person name="Yu L."/>
            <person name="Xia D."/>
        </authorList>
    </citation>
    <scope>X-RAY CRYSTALLOGRAPHY (2.35 ANGSTROMS)</scope>
</reference>
<reference key="13">
    <citation type="journal article" date="2004" name="J. Mol. Biol.">
        <title>Crystallographic studies of quinol oxidation site inhibitors: a modified classification of inhibitors for the cytochrome bc(1) complex.</title>
        <authorList>
            <person name="Esser L."/>
            <person name="Quinn B."/>
            <person name="Li Y.F."/>
            <person name="Zhang M."/>
            <person name="Elberry M."/>
            <person name="Yu L."/>
            <person name="Yu C.A."/>
            <person name="Xia D."/>
        </authorList>
    </citation>
    <scope>X-RAY CRYSTALLOGRAPHY (2.69 ANGSTROMS)</scope>
</reference>
<reference key="14">
    <citation type="journal article" date="2005" name="J. Mol. Biol.">
        <title>Binding of the respiratory chain inhibitor antimycin to the mitochondrial bc1 complex: a new crystal structure reveals an altered intramolecular hydrogen-bonding pattern.</title>
        <authorList>
            <person name="Huang L.S."/>
            <person name="Cobessi D."/>
            <person name="Tung E.Y."/>
            <person name="Berry E.A."/>
        </authorList>
    </citation>
    <scope>X-RAY CRYSTALLOGRAPHY (2.1 ANGSTROMS)</scope>
</reference>
<reference key="15">
    <citation type="journal article" date="2006" name="Proc. Natl. Acad. Sci. U.S.A.">
        <title>Surface-modulated motion switch: capture and release of iron-sulfur protein in the cytochrome bc1 complex.</title>
        <authorList>
            <person name="Esser L."/>
            <person name="Gong X."/>
            <person name="Yang S."/>
            <person name="Yu L."/>
            <person name="Yu C.A."/>
            <person name="Xia D."/>
        </authorList>
    </citation>
    <scope>X-RAY CRYSTALLOGRAPHY (2.26 ANGSTROMS)</scope>
</reference>
<reference key="16">
    <citation type="journal article" date="2016" name="Elife">
        <title>Functional asymmetry and electron flow in the bovine respirasome.</title>
        <authorList>
            <person name="Sousa J.S."/>
            <person name="Mills D.J."/>
            <person name="Vonck J."/>
            <person name="Kuehlbrandt W."/>
        </authorList>
    </citation>
    <scope>STRUCTURE BY ELECTRON MICROSCOPY (9.10 ANGSTROMS)</scope>
    <scope>SUBUNIT</scope>
</reference>
<keyword id="KW-0002">3D-structure</keyword>
<keyword id="KW-0007">Acetylation</keyword>
<keyword id="KW-0903">Direct protein sequencing</keyword>
<keyword id="KW-0249">Electron transport</keyword>
<keyword id="KW-0472">Membrane</keyword>
<keyword id="KW-0496">Mitochondrion</keyword>
<keyword id="KW-0999">Mitochondrion inner membrane</keyword>
<keyword id="KW-1185">Reference proteome</keyword>
<keyword id="KW-0679">Respiratory chain</keyword>
<keyword id="KW-0809">Transit peptide</keyword>
<keyword id="KW-0813">Transport</keyword>
<proteinExistence type="evidence at protein level"/>